<organism>
    <name type="scientific">Saccharomyces bayanus</name>
    <name type="common">Yeast</name>
    <name type="synonym">Saccharomyces uvarum x Saccharomyces eubayanus</name>
    <dbReference type="NCBI Taxonomy" id="4931"/>
    <lineage>
        <taxon>Eukaryota</taxon>
        <taxon>Fungi</taxon>
        <taxon>Dikarya</taxon>
        <taxon>Ascomycota</taxon>
        <taxon>Saccharomycotina</taxon>
        <taxon>Saccharomycetes</taxon>
        <taxon>Saccharomycetales</taxon>
        <taxon>Saccharomycetaceae</taxon>
        <taxon>Saccharomyces</taxon>
    </lineage>
</organism>
<dbReference type="EC" id="1.3.98.1"/>
<dbReference type="EMBL" id="AY323900">
    <property type="protein sequence ID" value="AAQ01777.1"/>
    <property type="molecule type" value="Genomic_DNA"/>
</dbReference>
<dbReference type="SMR" id="Q7Z894"/>
<dbReference type="UniPathway" id="UPA00070"/>
<dbReference type="GO" id="GO:0005737">
    <property type="term" value="C:cytoplasm"/>
    <property type="evidence" value="ECO:0007669"/>
    <property type="project" value="UniProtKB-SubCell"/>
</dbReference>
<dbReference type="GO" id="GO:1990663">
    <property type="term" value="F:dihydroorotate dehydrogenase (fumarate) activity"/>
    <property type="evidence" value="ECO:0007669"/>
    <property type="project" value="UniProtKB-EC"/>
</dbReference>
<dbReference type="GO" id="GO:0006207">
    <property type="term" value="P:'de novo' pyrimidine nucleobase biosynthetic process"/>
    <property type="evidence" value="ECO:0007669"/>
    <property type="project" value="InterPro"/>
</dbReference>
<dbReference type="GO" id="GO:0044205">
    <property type="term" value="P:'de novo' UMP biosynthetic process"/>
    <property type="evidence" value="ECO:0007669"/>
    <property type="project" value="UniProtKB-UniPathway"/>
</dbReference>
<dbReference type="CDD" id="cd04741">
    <property type="entry name" value="DHOD_1A_like"/>
    <property type="match status" value="1"/>
</dbReference>
<dbReference type="FunFam" id="3.20.20.70:FF:000027">
    <property type="entry name" value="Dihydropyrimidine dehydrogenase [NADP(+)]"/>
    <property type="match status" value="1"/>
</dbReference>
<dbReference type="Gene3D" id="3.20.20.70">
    <property type="entry name" value="Aldolase class I"/>
    <property type="match status" value="1"/>
</dbReference>
<dbReference type="Gene3D" id="2.30.26.10">
    <property type="entry name" value="Dihydroorotate Dehydrogenase A, chain A, domain 2"/>
    <property type="match status" value="1"/>
</dbReference>
<dbReference type="HAMAP" id="MF_00224">
    <property type="entry name" value="DHO_dh_type1"/>
    <property type="match status" value="1"/>
</dbReference>
<dbReference type="InterPro" id="IPR013785">
    <property type="entry name" value="Aldolase_TIM"/>
</dbReference>
<dbReference type="InterPro" id="IPR050074">
    <property type="entry name" value="DHO_dehydrogenase"/>
</dbReference>
<dbReference type="InterPro" id="IPR033886">
    <property type="entry name" value="DHOD_1A"/>
</dbReference>
<dbReference type="InterPro" id="IPR023359">
    <property type="entry name" value="Dihydro_DH_chainA_dom2"/>
</dbReference>
<dbReference type="InterPro" id="IPR024920">
    <property type="entry name" value="Dihydroorotate_DH_1"/>
</dbReference>
<dbReference type="InterPro" id="IPR012135">
    <property type="entry name" value="Dihydroorotate_DH_1_2"/>
</dbReference>
<dbReference type="InterPro" id="IPR005720">
    <property type="entry name" value="Dihydroorotate_DH_cat"/>
</dbReference>
<dbReference type="InterPro" id="IPR001295">
    <property type="entry name" value="Dihydroorotate_DH_CS"/>
</dbReference>
<dbReference type="NCBIfam" id="NF002702">
    <property type="entry name" value="PRK02506.1"/>
    <property type="match status" value="1"/>
</dbReference>
<dbReference type="PANTHER" id="PTHR48109:SF1">
    <property type="entry name" value="DIHYDROOROTATE DEHYDROGENASE (FUMARATE)"/>
    <property type="match status" value="1"/>
</dbReference>
<dbReference type="PANTHER" id="PTHR48109">
    <property type="entry name" value="DIHYDROOROTATE DEHYDROGENASE (QUINONE), MITOCHONDRIAL-RELATED"/>
    <property type="match status" value="1"/>
</dbReference>
<dbReference type="Pfam" id="PF01180">
    <property type="entry name" value="DHO_dh"/>
    <property type="match status" value="1"/>
</dbReference>
<dbReference type="PIRSF" id="PIRSF000164">
    <property type="entry name" value="DHO_oxidase"/>
    <property type="match status" value="1"/>
</dbReference>
<dbReference type="SUPFAM" id="SSF51395">
    <property type="entry name" value="FMN-linked oxidoreductases"/>
    <property type="match status" value="1"/>
</dbReference>
<dbReference type="PROSITE" id="PS00911">
    <property type="entry name" value="DHODEHASE_1"/>
    <property type="match status" value="1"/>
</dbReference>
<dbReference type="PROSITE" id="PS00912">
    <property type="entry name" value="DHODEHASE_2"/>
    <property type="match status" value="1"/>
</dbReference>
<name>PYRD_SACBA</name>
<sequence length="314" mass="34702">MTASLTTKFLDNTYENPFMNASGVHCMTTPELDELANSKAGAFITKSATTLEREGNPKPRYISVPLGSINSMGLPNEGVDYYLSHVLNRQKKYPDAPAIFFSVAGMSIDENLGLLKKIQESEFNGITELNLSCPNVPGKPQVAYDFDLTKETLEKVFAFFNKPLGIKLPPYFDFAHFDIMAKILNEFPLAYVNSINSVGNGLFIDVEKESVVVKPKNGFGGIGGEYVKPTALANVRAFYTRLRPEIKIIGTGGIKSGKDAFEHLLCGASMLQIGTELQKEGVQIFERIERELKDIMEAKGYTSIDEFRGKLNSL</sequence>
<evidence type="ECO:0000250" key="1"/>
<evidence type="ECO:0000305" key="2"/>
<proteinExistence type="inferred from homology"/>
<reference key="1">
    <citation type="journal article" date="2005" name="Eukaryot. Cell">
        <title>Contribution of horizontal gene transfer to the evolution of Saccharomyces cerevisiae.</title>
        <authorList>
            <person name="Hall C.R."/>
            <person name="Brachat S."/>
            <person name="Dietrich F.S."/>
        </authorList>
    </citation>
    <scope>NUCLEOTIDE SEQUENCE [GENOMIC DNA]</scope>
    <source>
        <strain>CBS 424 / BCRC 21964 / CLIB 250 / NBRC 0254 / NRRL Y-12645</strain>
    </source>
</reference>
<accession>Q7Z894</accession>
<protein>
    <recommendedName>
        <fullName>Dihydroorotate dehydrogenase (fumarate)</fullName>
        <shortName>DHOD</shortName>
        <shortName>DHODase</shortName>
        <shortName>DHOdehase</shortName>
        <ecNumber>1.3.98.1</ecNumber>
    </recommendedName>
    <alternativeName>
        <fullName>Dihydroorotate oxidase</fullName>
    </alternativeName>
</protein>
<comment type="function">
    <text evidence="1">Catalyzes the conversion of dihydroorotate to orotate with fumarate as the electron acceptor.</text>
</comment>
<comment type="catalytic activity">
    <reaction>
        <text>(S)-dihydroorotate + fumarate = orotate + succinate</text>
        <dbReference type="Rhea" id="RHEA:30059"/>
        <dbReference type="ChEBI" id="CHEBI:29806"/>
        <dbReference type="ChEBI" id="CHEBI:30031"/>
        <dbReference type="ChEBI" id="CHEBI:30839"/>
        <dbReference type="ChEBI" id="CHEBI:30864"/>
        <dbReference type="EC" id="1.3.98.1"/>
    </reaction>
</comment>
<comment type="cofactor">
    <cofactor evidence="1">
        <name>FMN</name>
        <dbReference type="ChEBI" id="CHEBI:58210"/>
    </cofactor>
    <text evidence="1">Binds 1 FMN per subunit.</text>
</comment>
<comment type="pathway">
    <text>Pyrimidine metabolism; UMP biosynthesis via de novo pathway.</text>
</comment>
<comment type="subunit">
    <text evidence="1">Homodimer.</text>
</comment>
<comment type="subcellular location">
    <subcellularLocation>
        <location evidence="1">Cytoplasm</location>
    </subcellularLocation>
</comment>
<comment type="similarity">
    <text evidence="2">Belongs to the dihydroorotate dehydrogenase family. Type 1 subfamily.</text>
</comment>
<keyword id="KW-0963">Cytoplasm</keyword>
<keyword id="KW-0285">Flavoprotein</keyword>
<keyword id="KW-0288">FMN</keyword>
<keyword id="KW-0560">Oxidoreductase</keyword>
<keyword id="KW-0665">Pyrimidine biosynthesis</keyword>
<feature type="chain" id="PRO_0000148501" description="Dihydroorotate dehydrogenase (fumarate)">
    <location>
        <begin position="1"/>
        <end position="314"/>
    </location>
</feature>
<feature type="active site" description="Nucleophile" evidence="1">
    <location>
        <position position="132"/>
    </location>
</feature>
<feature type="active site" description="Nucleophile" evidence="1">
    <location>
        <position position="133"/>
    </location>
</feature>
<feature type="binding site" evidence="1">
    <location>
        <begin position="46"/>
        <end position="47"/>
    </location>
    <ligand>
        <name>FMN</name>
        <dbReference type="ChEBI" id="CHEBI:58210"/>
    </ligand>
</feature>
<feature type="binding site" evidence="1">
    <location>
        <position position="46"/>
    </location>
    <ligand>
        <name>substrate</name>
    </ligand>
</feature>
<feature type="binding site" evidence="1">
    <location>
        <begin position="70"/>
        <end position="74"/>
    </location>
    <ligand>
        <name>substrate</name>
    </ligand>
</feature>
<feature type="binding site" evidence="1">
    <location>
        <position position="130"/>
    </location>
    <ligand>
        <name>FMN</name>
        <dbReference type="ChEBI" id="CHEBI:58210"/>
    </ligand>
</feature>
<feature type="binding site" evidence="1">
    <location>
        <position position="130"/>
    </location>
    <ligand>
        <name>substrate</name>
    </ligand>
</feature>
<feature type="binding site" evidence="1">
    <location>
        <position position="167"/>
    </location>
    <ligand>
        <name>FMN</name>
        <dbReference type="ChEBI" id="CHEBI:58210"/>
    </ligand>
</feature>
<feature type="binding site" evidence="1">
    <location>
        <position position="195"/>
    </location>
    <ligand>
        <name>FMN</name>
        <dbReference type="ChEBI" id="CHEBI:58210"/>
    </ligand>
</feature>
<feature type="binding site" evidence="1">
    <location>
        <begin position="196"/>
        <end position="197"/>
    </location>
    <ligand>
        <name>substrate</name>
    </ligand>
</feature>
<feature type="binding site" evidence="1">
    <location>
        <position position="224"/>
    </location>
    <ligand>
        <name>FMN</name>
        <dbReference type="ChEBI" id="CHEBI:58210"/>
    </ligand>
</feature>
<feature type="binding site" evidence="1">
    <location>
        <begin position="252"/>
        <end position="253"/>
    </location>
    <ligand>
        <name>FMN</name>
        <dbReference type="ChEBI" id="CHEBI:58210"/>
    </ligand>
</feature>
<feature type="binding site" evidence="1">
    <location>
        <begin position="274"/>
        <end position="275"/>
    </location>
    <ligand>
        <name>FMN</name>
        <dbReference type="ChEBI" id="CHEBI:58210"/>
    </ligand>
</feature>
<gene>
    <name type="primary">URA1</name>
</gene>